<organism>
    <name type="scientific">Cupriavidus metallidurans (strain ATCC 43123 / DSM 2839 / NBRC 102507 / CH34)</name>
    <name type="common">Ralstonia metallidurans</name>
    <dbReference type="NCBI Taxonomy" id="266264"/>
    <lineage>
        <taxon>Bacteria</taxon>
        <taxon>Pseudomonadati</taxon>
        <taxon>Pseudomonadota</taxon>
        <taxon>Betaproteobacteria</taxon>
        <taxon>Burkholderiales</taxon>
        <taxon>Burkholderiaceae</taxon>
        <taxon>Cupriavidus</taxon>
    </lineage>
</organism>
<sequence>MIETDKLTGADRLPDRVISATPASTQEEAFERALRPKLLDEYVGQEKVRGQLDIFMHAARKRREALDHVLLFGPPGLGKTTLAHIIAREMGVNLRQTSGPVLERPGDLAALLTNLEAHDVLFIDEIHRLSPVVEEILYPALEDYQIDIMIGEGPAARSVKLDLQPFTLVGATTRAGMLTNPLRDRFGIVARLEFYTPDELARIVARSALLLNAAIDPAGALEIARRARGTPRIANRLLRRVRDFAEVKSDGTITRELADAALEMLDVDSVGFDLMDRKLLEAVLHKFDGGPVGVDNLAAAIGEARDTIEDVLEPYMIQQGYLQRTPRGRMATAAAYRHFGLASPRDGGADLAEGL</sequence>
<proteinExistence type="inferred from homology"/>
<evidence type="ECO:0000255" key="1">
    <source>
        <dbReference type="HAMAP-Rule" id="MF_00016"/>
    </source>
</evidence>
<protein>
    <recommendedName>
        <fullName evidence="1">Holliday junction branch migration complex subunit RuvB</fullName>
        <ecNumber evidence="1">3.6.4.-</ecNumber>
    </recommendedName>
</protein>
<feature type="chain" id="PRO_1000001454" description="Holliday junction branch migration complex subunit RuvB">
    <location>
        <begin position="1"/>
        <end position="355"/>
    </location>
</feature>
<feature type="region of interest" description="Large ATPase domain (RuvB-L)" evidence="1">
    <location>
        <begin position="4"/>
        <end position="195"/>
    </location>
</feature>
<feature type="region of interest" description="Small ATPAse domain (RuvB-S)" evidence="1">
    <location>
        <begin position="196"/>
        <end position="266"/>
    </location>
</feature>
<feature type="region of interest" description="Head domain (RuvB-H)" evidence="1">
    <location>
        <begin position="269"/>
        <end position="355"/>
    </location>
</feature>
<feature type="binding site" evidence="1">
    <location>
        <position position="34"/>
    </location>
    <ligand>
        <name>ATP</name>
        <dbReference type="ChEBI" id="CHEBI:30616"/>
    </ligand>
</feature>
<feature type="binding site" evidence="1">
    <location>
        <position position="35"/>
    </location>
    <ligand>
        <name>ATP</name>
        <dbReference type="ChEBI" id="CHEBI:30616"/>
    </ligand>
</feature>
<feature type="binding site" evidence="1">
    <location>
        <position position="76"/>
    </location>
    <ligand>
        <name>ATP</name>
        <dbReference type="ChEBI" id="CHEBI:30616"/>
    </ligand>
</feature>
<feature type="binding site" evidence="1">
    <location>
        <position position="79"/>
    </location>
    <ligand>
        <name>ATP</name>
        <dbReference type="ChEBI" id="CHEBI:30616"/>
    </ligand>
</feature>
<feature type="binding site" evidence="1">
    <location>
        <position position="80"/>
    </location>
    <ligand>
        <name>ATP</name>
        <dbReference type="ChEBI" id="CHEBI:30616"/>
    </ligand>
</feature>
<feature type="binding site" evidence="1">
    <location>
        <position position="80"/>
    </location>
    <ligand>
        <name>Mg(2+)</name>
        <dbReference type="ChEBI" id="CHEBI:18420"/>
    </ligand>
</feature>
<feature type="binding site" evidence="1">
    <location>
        <position position="81"/>
    </location>
    <ligand>
        <name>ATP</name>
        <dbReference type="ChEBI" id="CHEBI:30616"/>
    </ligand>
</feature>
<feature type="binding site" evidence="1">
    <location>
        <begin position="142"/>
        <end position="144"/>
    </location>
    <ligand>
        <name>ATP</name>
        <dbReference type="ChEBI" id="CHEBI:30616"/>
    </ligand>
</feature>
<feature type="binding site" evidence="1">
    <location>
        <position position="185"/>
    </location>
    <ligand>
        <name>ATP</name>
        <dbReference type="ChEBI" id="CHEBI:30616"/>
    </ligand>
</feature>
<feature type="binding site" evidence="1">
    <location>
        <position position="195"/>
    </location>
    <ligand>
        <name>ATP</name>
        <dbReference type="ChEBI" id="CHEBI:30616"/>
    </ligand>
</feature>
<feature type="binding site" evidence="1">
    <location>
        <position position="232"/>
    </location>
    <ligand>
        <name>ATP</name>
        <dbReference type="ChEBI" id="CHEBI:30616"/>
    </ligand>
</feature>
<feature type="binding site" evidence="1">
    <location>
        <position position="305"/>
    </location>
    <ligand>
        <name>DNA</name>
        <dbReference type="ChEBI" id="CHEBI:16991"/>
    </ligand>
</feature>
<feature type="binding site" evidence="1">
    <location>
        <position position="324"/>
    </location>
    <ligand>
        <name>DNA</name>
        <dbReference type="ChEBI" id="CHEBI:16991"/>
    </ligand>
</feature>
<feature type="binding site" evidence="1">
    <location>
        <position position="329"/>
    </location>
    <ligand>
        <name>DNA</name>
        <dbReference type="ChEBI" id="CHEBI:16991"/>
    </ligand>
</feature>
<accession>Q1LRB7</accession>
<comment type="function">
    <text evidence="1">The RuvA-RuvB-RuvC complex processes Holliday junction (HJ) DNA during genetic recombination and DNA repair, while the RuvA-RuvB complex plays an important role in the rescue of blocked DNA replication forks via replication fork reversal (RFR). RuvA specifically binds to HJ cruciform DNA, conferring on it an open structure. The RuvB hexamer acts as an ATP-dependent pump, pulling dsDNA into and through the RuvAB complex. RuvB forms 2 homohexamers on either side of HJ DNA bound by 1 or 2 RuvA tetramers; 4 subunits per hexamer contact DNA at a time. Coordinated motions by a converter formed by DNA-disengaged RuvB subunits stimulates ATP hydrolysis and nucleotide exchange. Immobilization of the converter enables RuvB to convert the ATP-contained energy into a lever motion, pulling 2 nucleotides of DNA out of the RuvA tetramer per ATP hydrolyzed, thus driving DNA branch migration. The RuvB motors rotate together with the DNA substrate, which together with the progressing nucleotide cycle form the mechanistic basis for DNA recombination by continuous HJ branch migration. Branch migration allows RuvC to scan DNA until it finds its consensus sequence, where it cleaves and resolves cruciform DNA.</text>
</comment>
<comment type="catalytic activity">
    <reaction evidence="1">
        <text>ATP + H2O = ADP + phosphate + H(+)</text>
        <dbReference type="Rhea" id="RHEA:13065"/>
        <dbReference type="ChEBI" id="CHEBI:15377"/>
        <dbReference type="ChEBI" id="CHEBI:15378"/>
        <dbReference type="ChEBI" id="CHEBI:30616"/>
        <dbReference type="ChEBI" id="CHEBI:43474"/>
        <dbReference type="ChEBI" id="CHEBI:456216"/>
    </reaction>
</comment>
<comment type="subunit">
    <text evidence="1">Homohexamer. Forms an RuvA(8)-RuvB(12)-Holliday junction (HJ) complex. HJ DNA is sandwiched between 2 RuvA tetramers; dsDNA enters through RuvA and exits via RuvB. An RuvB hexamer assembles on each DNA strand where it exits the tetramer. Each RuvB hexamer is contacted by two RuvA subunits (via domain III) on 2 adjacent RuvB subunits; this complex drives branch migration. In the full resolvosome a probable DNA-RuvA(4)-RuvB(12)-RuvC(2) complex forms which resolves the HJ.</text>
</comment>
<comment type="subcellular location">
    <subcellularLocation>
        <location evidence="1">Cytoplasm</location>
    </subcellularLocation>
</comment>
<comment type="domain">
    <text evidence="1">Has 3 domains, the large (RuvB-L) and small ATPase (RuvB-S) domains and the C-terminal head (RuvB-H) domain. The head domain binds DNA, while the ATPase domains jointly bind ATP, ADP or are empty depending on the state of the subunit in the translocation cycle. During a single DNA translocation step the structure of each domain remains the same, but their relative positions change.</text>
</comment>
<comment type="similarity">
    <text evidence="1">Belongs to the RuvB family.</text>
</comment>
<reference key="1">
    <citation type="journal article" date="2010" name="PLoS ONE">
        <title>The complete genome sequence of Cupriavidus metallidurans strain CH34, a master survivalist in harsh and anthropogenic environments.</title>
        <authorList>
            <person name="Janssen P.J."/>
            <person name="Van Houdt R."/>
            <person name="Moors H."/>
            <person name="Monsieurs P."/>
            <person name="Morin N."/>
            <person name="Michaux A."/>
            <person name="Benotmane M.A."/>
            <person name="Leys N."/>
            <person name="Vallaeys T."/>
            <person name="Lapidus A."/>
            <person name="Monchy S."/>
            <person name="Medigue C."/>
            <person name="Taghavi S."/>
            <person name="McCorkle S."/>
            <person name="Dunn J."/>
            <person name="van der Lelie D."/>
            <person name="Mergeay M."/>
        </authorList>
    </citation>
    <scope>NUCLEOTIDE SEQUENCE [LARGE SCALE GENOMIC DNA]</scope>
    <source>
        <strain>ATCC 43123 / DSM 2839 / NBRC 102507 / CH34</strain>
    </source>
</reference>
<dbReference type="EC" id="3.6.4.-" evidence="1"/>
<dbReference type="EMBL" id="CP000352">
    <property type="protein sequence ID" value="ABF07309.1"/>
    <property type="molecule type" value="Genomic_DNA"/>
</dbReference>
<dbReference type="RefSeq" id="WP_011515298.1">
    <property type="nucleotide sequence ID" value="NC_007973.1"/>
</dbReference>
<dbReference type="SMR" id="Q1LRB7"/>
<dbReference type="STRING" id="266264.Rmet_0423"/>
<dbReference type="KEGG" id="rme:Rmet_0423"/>
<dbReference type="eggNOG" id="COG2255">
    <property type="taxonomic scope" value="Bacteria"/>
</dbReference>
<dbReference type="HOGENOM" id="CLU_055599_1_0_4"/>
<dbReference type="Proteomes" id="UP000002429">
    <property type="component" value="Chromosome"/>
</dbReference>
<dbReference type="GO" id="GO:0005737">
    <property type="term" value="C:cytoplasm"/>
    <property type="evidence" value="ECO:0007669"/>
    <property type="project" value="UniProtKB-SubCell"/>
</dbReference>
<dbReference type="GO" id="GO:0048476">
    <property type="term" value="C:Holliday junction resolvase complex"/>
    <property type="evidence" value="ECO:0007669"/>
    <property type="project" value="UniProtKB-UniRule"/>
</dbReference>
<dbReference type="GO" id="GO:0005524">
    <property type="term" value="F:ATP binding"/>
    <property type="evidence" value="ECO:0007669"/>
    <property type="project" value="UniProtKB-UniRule"/>
</dbReference>
<dbReference type="GO" id="GO:0016887">
    <property type="term" value="F:ATP hydrolysis activity"/>
    <property type="evidence" value="ECO:0007669"/>
    <property type="project" value="InterPro"/>
</dbReference>
<dbReference type="GO" id="GO:0000400">
    <property type="term" value="F:four-way junction DNA binding"/>
    <property type="evidence" value="ECO:0007669"/>
    <property type="project" value="UniProtKB-UniRule"/>
</dbReference>
<dbReference type="GO" id="GO:0009378">
    <property type="term" value="F:four-way junction helicase activity"/>
    <property type="evidence" value="ECO:0007669"/>
    <property type="project" value="InterPro"/>
</dbReference>
<dbReference type="GO" id="GO:0006310">
    <property type="term" value="P:DNA recombination"/>
    <property type="evidence" value="ECO:0007669"/>
    <property type="project" value="UniProtKB-UniRule"/>
</dbReference>
<dbReference type="GO" id="GO:0006281">
    <property type="term" value="P:DNA repair"/>
    <property type="evidence" value="ECO:0007669"/>
    <property type="project" value="UniProtKB-UniRule"/>
</dbReference>
<dbReference type="CDD" id="cd00009">
    <property type="entry name" value="AAA"/>
    <property type="match status" value="1"/>
</dbReference>
<dbReference type="FunFam" id="1.10.10.10:FF:000086">
    <property type="entry name" value="Holliday junction ATP-dependent DNA helicase RuvB"/>
    <property type="match status" value="1"/>
</dbReference>
<dbReference type="FunFam" id="1.10.8.60:FF:000023">
    <property type="entry name" value="Holliday junction ATP-dependent DNA helicase RuvB"/>
    <property type="match status" value="1"/>
</dbReference>
<dbReference type="FunFam" id="3.40.50.300:FF:000073">
    <property type="entry name" value="Holliday junction ATP-dependent DNA helicase RuvB"/>
    <property type="match status" value="1"/>
</dbReference>
<dbReference type="Gene3D" id="1.10.8.60">
    <property type="match status" value="1"/>
</dbReference>
<dbReference type="Gene3D" id="3.40.50.300">
    <property type="entry name" value="P-loop containing nucleotide triphosphate hydrolases"/>
    <property type="match status" value="1"/>
</dbReference>
<dbReference type="Gene3D" id="1.10.10.10">
    <property type="entry name" value="Winged helix-like DNA-binding domain superfamily/Winged helix DNA-binding domain"/>
    <property type="match status" value="1"/>
</dbReference>
<dbReference type="HAMAP" id="MF_00016">
    <property type="entry name" value="DNA_HJ_migration_RuvB"/>
    <property type="match status" value="1"/>
</dbReference>
<dbReference type="InterPro" id="IPR003593">
    <property type="entry name" value="AAA+_ATPase"/>
</dbReference>
<dbReference type="InterPro" id="IPR041445">
    <property type="entry name" value="AAA_lid_4"/>
</dbReference>
<dbReference type="InterPro" id="IPR004605">
    <property type="entry name" value="DNA_helicase_Holl-junc_RuvB"/>
</dbReference>
<dbReference type="InterPro" id="IPR027417">
    <property type="entry name" value="P-loop_NTPase"/>
</dbReference>
<dbReference type="InterPro" id="IPR008824">
    <property type="entry name" value="RuvB-like_N"/>
</dbReference>
<dbReference type="InterPro" id="IPR008823">
    <property type="entry name" value="RuvB_C"/>
</dbReference>
<dbReference type="InterPro" id="IPR036388">
    <property type="entry name" value="WH-like_DNA-bd_sf"/>
</dbReference>
<dbReference type="InterPro" id="IPR036390">
    <property type="entry name" value="WH_DNA-bd_sf"/>
</dbReference>
<dbReference type="NCBIfam" id="NF000868">
    <property type="entry name" value="PRK00080.1"/>
    <property type="match status" value="1"/>
</dbReference>
<dbReference type="NCBIfam" id="TIGR00635">
    <property type="entry name" value="ruvB"/>
    <property type="match status" value="1"/>
</dbReference>
<dbReference type="PANTHER" id="PTHR42848">
    <property type="match status" value="1"/>
</dbReference>
<dbReference type="PANTHER" id="PTHR42848:SF1">
    <property type="entry name" value="HOLLIDAY JUNCTION BRANCH MIGRATION COMPLEX SUBUNIT RUVB"/>
    <property type="match status" value="1"/>
</dbReference>
<dbReference type="Pfam" id="PF17864">
    <property type="entry name" value="AAA_lid_4"/>
    <property type="match status" value="1"/>
</dbReference>
<dbReference type="Pfam" id="PF05491">
    <property type="entry name" value="RuvB_C"/>
    <property type="match status" value="1"/>
</dbReference>
<dbReference type="Pfam" id="PF05496">
    <property type="entry name" value="RuvB_N"/>
    <property type="match status" value="1"/>
</dbReference>
<dbReference type="SMART" id="SM00382">
    <property type="entry name" value="AAA"/>
    <property type="match status" value="1"/>
</dbReference>
<dbReference type="SUPFAM" id="SSF52540">
    <property type="entry name" value="P-loop containing nucleoside triphosphate hydrolases"/>
    <property type="match status" value="1"/>
</dbReference>
<dbReference type="SUPFAM" id="SSF46785">
    <property type="entry name" value="Winged helix' DNA-binding domain"/>
    <property type="match status" value="1"/>
</dbReference>
<name>RUVB_CUPMC</name>
<gene>
    <name evidence="1" type="primary">ruvB</name>
    <name type="ordered locus">Rmet_0423</name>
</gene>
<keyword id="KW-0067">ATP-binding</keyword>
<keyword id="KW-0963">Cytoplasm</keyword>
<keyword id="KW-0227">DNA damage</keyword>
<keyword id="KW-0233">DNA recombination</keyword>
<keyword id="KW-0234">DNA repair</keyword>
<keyword id="KW-0238">DNA-binding</keyword>
<keyword id="KW-0378">Hydrolase</keyword>
<keyword id="KW-0547">Nucleotide-binding</keyword>
<keyword id="KW-1185">Reference proteome</keyword>